<protein>
    <recommendedName>
        <fullName>DNA polymerase III subunit alpha</fullName>
        <ecNumber>2.7.7.7</ecNumber>
    </recommendedName>
</protein>
<organism>
    <name type="scientific">Borreliella burgdorferi (strain ATCC 35210 / DSM 4680 / CIP 102532 / B31)</name>
    <name type="common">Borrelia burgdorferi</name>
    <dbReference type="NCBI Taxonomy" id="224326"/>
    <lineage>
        <taxon>Bacteria</taxon>
        <taxon>Pseudomonadati</taxon>
        <taxon>Spirochaetota</taxon>
        <taxon>Spirochaetia</taxon>
        <taxon>Spirochaetales</taxon>
        <taxon>Borreliaceae</taxon>
        <taxon>Borreliella</taxon>
    </lineage>
</organism>
<evidence type="ECO:0000250" key="1"/>
<evidence type="ECO:0000305" key="2"/>
<dbReference type="EC" id="2.7.7.7"/>
<dbReference type="EMBL" id="AE000783">
    <property type="protein sequence ID" value="AAC66944.1"/>
    <property type="status" value="ALT_INIT"/>
    <property type="molecule type" value="Genomic_DNA"/>
</dbReference>
<dbReference type="PIR" id="B70172">
    <property type="entry name" value="B70172"/>
</dbReference>
<dbReference type="RefSeq" id="NP_212713.1">
    <property type="nucleotide sequence ID" value="NC_001318.1"/>
</dbReference>
<dbReference type="RefSeq" id="WP_010889768.1">
    <property type="nucleotide sequence ID" value="NC_001318.1"/>
</dbReference>
<dbReference type="SMR" id="O51526"/>
<dbReference type="STRING" id="224326.BB_0579"/>
<dbReference type="PaxDb" id="224326-BB_0579"/>
<dbReference type="EnsemblBacteria" id="AAC66944">
    <property type="protein sequence ID" value="AAC66944"/>
    <property type="gene ID" value="BB_0579"/>
</dbReference>
<dbReference type="KEGG" id="bbu:BB_0579"/>
<dbReference type="PATRIC" id="fig|224326.49.peg.970"/>
<dbReference type="HOGENOM" id="CLU_001600_0_0_12"/>
<dbReference type="OrthoDB" id="9803237at2"/>
<dbReference type="Proteomes" id="UP000001807">
    <property type="component" value="Chromosome"/>
</dbReference>
<dbReference type="GO" id="GO:0005737">
    <property type="term" value="C:cytoplasm"/>
    <property type="evidence" value="ECO:0007669"/>
    <property type="project" value="UniProtKB-SubCell"/>
</dbReference>
<dbReference type="GO" id="GO:0008408">
    <property type="term" value="F:3'-5' exonuclease activity"/>
    <property type="evidence" value="ECO:0007669"/>
    <property type="project" value="InterPro"/>
</dbReference>
<dbReference type="GO" id="GO:0003887">
    <property type="term" value="F:DNA-directed DNA polymerase activity"/>
    <property type="evidence" value="ECO:0007669"/>
    <property type="project" value="UniProtKB-KW"/>
</dbReference>
<dbReference type="GO" id="GO:0003676">
    <property type="term" value="F:nucleic acid binding"/>
    <property type="evidence" value="ECO:0007669"/>
    <property type="project" value="InterPro"/>
</dbReference>
<dbReference type="GO" id="GO:0006260">
    <property type="term" value="P:DNA replication"/>
    <property type="evidence" value="ECO:0007669"/>
    <property type="project" value="UniProtKB-KW"/>
</dbReference>
<dbReference type="CDD" id="cd04485">
    <property type="entry name" value="DnaE_OBF"/>
    <property type="match status" value="1"/>
</dbReference>
<dbReference type="CDD" id="cd12113">
    <property type="entry name" value="PHP_PolIIIA_DnaE3"/>
    <property type="match status" value="1"/>
</dbReference>
<dbReference type="Gene3D" id="1.10.150.870">
    <property type="match status" value="1"/>
</dbReference>
<dbReference type="Gene3D" id="1.10.10.1600">
    <property type="entry name" value="Bacterial DNA polymerase III alpha subunit, thumb domain"/>
    <property type="match status" value="1"/>
</dbReference>
<dbReference type="Gene3D" id="3.20.20.140">
    <property type="entry name" value="Metal-dependent hydrolases"/>
    <property type="match status" value="1"/>
</dbReference>
<dbReference type="InterPro" id="IPR011708">
    <property type="entry name" value="DNA_pol3_alpha_NTPase_dom"/>
</dbReference>
<dbReference type="InterPro" id="IPR041931">
    <property type="entry name" value="DNA_pol3_alpha_thumb_dom"/>
</dbReference>
<dbReference type="InterPro" id="IPR040982">
    <property type="entry name" value="DNA_pol3_finger"/>
</dbReference>
<dbReference type="InterPro" id="IPR004805">
    <property type="entry name" value="DnaE2/DnaE/PolC"/>
</dbReference>
<dbReference type="InterPro" id="IPR029460">
    <property type="entry name" value="DNAPol_HHH"/>
</dbReference>
<dbReference type="InterPro" id="IPR004365">
    <property type="entry name" value="NA-bd_OB_tRNA"/>
</dbReference>
<dbReference type="InterPro" id="IPR004013">
    <property type="entry name" value="PHP_dom"/>
</dbReference>
<dbReference type="InterPro" id="IPR003141">
    <property type="entry name" value="Pol/His_phosphatase_N"/>
</dbReference>
<dbReference type="InterPro" id="IPR016195">
    <property type="entry name" value="Pol/histidinol_Pase-like"/>
</dbReference>
<dbReference type="NCBIfam" id="TIGR00594">
    <property type="entry name" value="polc"/>
    <property type="match status" value="1"/>
</dbReference>
<dbReference type="NCBIfam" id="NF004226">
    <property type="entry name" value="PRK05673.1"/>
    <property type="match status" value="1"/>
</dbReference>
<dbReference type="NCBIfam" id="NF005298">
    <property type="entry name" value="PRK06826.1"/>
    <property type="match status" value="1"/>
</dbReference>
<dbReference type="PANTHER" id="PTHR32294">
    <property type="entry name" value="DNA POLYMERASE III SUBUNIT ALPHA"/>
    <property type="match status" value="1"/>
</dbReference>
<dbReference type="PANTHER" id="PTHR32294:SF0">
    <property type="entry name" value="DNA POLYMERASE III SUBUNIT ALPHA"/>
    <property type="match status" value="1"/>
</dbReference>
<dbReference type="Pfam" id="PF07733">
    <property type="entry name" value="DNA_pol3_alpha"/>
    <property type="match status" value="1"/>
</dbReference>
<dbReference type="Pfam" id="PF17657">
    <property type="entry name" value="DNA_pol3_finger"/>
    <property type="match status" value="1"/>
</dbReference>
<dbReference type="Pfam" id="PF14579">
    <property type="entry name" value="HHH_6"/>
    <property type="match status" value="1"/>
</dbReference>
<dbReference type="Pfam" id="PF02811">
    <property type="entry name" value="PHP"/>
    <property type="match status" value="1"/>
</dbReference>
<dbReference type="Pfam" id="PF01336">
    <property type="entry name" value="tRNA_anti-codon"/>
    <property type="match status" value="1"/>
</dbReference>
<dbReference type="SMART" id="SM00481">
    <property type="entry name" value="POLIIIAc"/>
    <property type="match status" value="1"/>
</dbReference>
<dbReference type="SUPFAM" id="SSF89550">
    <property type="entry name" value="PHP domain-like"/>
    <property type="match status" value="1"/>
</dbReference>
<gene>
    <name type="primary">dnaE</name>
    <name type="ordered locus">BB_0579</name>
</gene>
<feature type="chain" id="PRO_0000103311" description="DNA polymerase III subunit alpha">
    <location>
        <begin position="1"/>
        <end position="1147"/>
    </location>
</feature>
<name>DPO3A_BORBU</name>
<reference key="1">
    <citation type="journal article" date="1997" name="Nature">
        <title>Genomic sequence of a Lyme disease spirochaete, Borrelia burgdorferi.</title>
        <authorList>
            <person name="Fraser C.M."/>
            <person name="Casjens S."/>
            <person name="Huang W.M."/>
            <person name="Sutton G.G."/>
            <person name="Clayton R.A."/>
            <person name="Lathigra R."/>
            <person name="White O."/>
            <person name="Ketchum K.A."/>
            <person name="Dodson R.J."/>
            <person name="Hickey E.K."/>
            <person name="Gwinn M.L."/>
            <person name="Dougherty B.A."/>
            <person name="Tomb J.-F."/>
            <person name="Fleischmann R.D."/>
            <person name="Richardson D.L."/>
            <person name="Peterson J.D."/>
            <person name="Kerlavage A.R."/>
            <person name="Quackenbush J."/>
            <person name="Salzberg S.L."/>
            <person name="Hanson M."/>
            <person name="van Vugt R."/>
            <person name="Palmer N."/>
            <person name="Adams M.D."/>
            <person name="Gocayne J.D."/>
            <person name="Weidman J.F."/>
            <person name="Utterback T.R."/>
            <person name="Watthey L."/>
            <person name="McDonald L.A."/>
            <person name="Artiach P."/>
            <person name="Bowman C."/>
            <person name="Garland S.A."/>
            <person name="Fujii C."/>
            <person name="Cotton M.D."/>
            <person name="Horst K."/>
            <person name="Roberts K.M."/>
            <person name="Hatch B."/>
            <person name="Smith H.O."/>
            <person name="Venter J.C."/>
        </authorList>
    </citation>
    <scope>NUCLEOTIDE SEQUENCE [LARGE SCALE GENOMIC DNA]</scope>
    <source>
        <strain>ATCC 35210 / DSM 4680 / CIP 102532 / B31</strain>
    </source>
</reference>
<sequence length="1147" mass="130656">MSFRSRFIHLHVHSDYSLLDGAAKISDIISKAKKCNMSHIALTDHGNLFGAIKFYKEAKKAGIKPIIGIEAYMAKTSKFLKKQDDLGKMSYHLILLAKNELGYKNLLKLTSISYLEGFYYRPRIDKDDLEKYSEGLICTSACIGGLIPRLILANRFEDAKNEILWFKKVFGNDFYLELQRHGIKDQDIVNERLVKYSRELGVPLTAANDSHYVNREDATAQDIIVCIGTGAKKSDENRLKMETNEFYIKSQEEMCELFNDLPEALENTVRIAEKCDDFKITFPGPILPDYQIPVEFNTLGEYLEHLTLEGLKFRYKNLTSKIKDRAFYELSVIIGMGFEGYFLIVWDFIKFAHDNDIPVGAGRGSGAGSIVAYALRITDIDPLKYNLLFERFLNPERISMPDFDIDFCFEGRDEIIKYVTNKYGEDKVAQIITFGTLKPKAVVKDVARVLDIPFAESNELTKFIPDGPKVSLKEVLDDNSLKECFTSKPVYKELMNAALVLEGMNRHASTHAAGIVISKTPLTDYVPLYKDYKQGSVSTQYTMDLLEECGLVKMDFLGLKTLTLIKNAENLIRSVNPDFKIKNIPDNDVKTFNMLGEGRSASVFQFESEGMQQILKDAKPDSIEDLIALNALYRPGPMQFIPQFIAAKKGVKRIKYPHPDLKEVLRPTYGVIVYQEQVMEVAKIIGGFSLGKADILRRAMGKKKEDEMNEMKVDFLRGAIEKGYDKEIASEIFELLKPFSGYGFNKSHAAAYSLIAYQTAYLKANYPEYFMAANLTNEINNNDKLSYYIEESKAIGINVLKPDINRSFREFRVTDSGISYGLNGIKNLGGIVVDLIIDEREKNGKYSSFEDFIRRVDDKVINKKFLESAIKSGLFDSLDQNRKTLFENLDHLIEVVSEDKNNKKLGQNSLFGALESQDPIQQSFNYQTFKEYSYSELLGFEKELLGFYVSGHPLDPYKKAIDSFSSLNVLTDLAAKKDSIVQFSGILNSVKVIQTKRNNAKMAFGVIEDFKGAIDIVVFTESYERYRNFLLEGNVIGVVGRLTFNRDKFSIVVEKVVNIERLSEYKINNIHIKFLNNKLNDLQLLNSLKESISNFEDNSGFSNVYFYLRENGKDLKLKMNSILNFVPDEDKLDKLRKCVIVEDVWVD</sequence>
<accession>O51526</accession>
<proteinExistence type="inferred from homology"/>
<comment type="function">
    <text evidence="1">DNA polymerase III is a complex, multichain enzyme responsible for most of the replicative synthesis in bacteria. This DNA polymerase also exhibits 3' to 5' exonuclease activity. The alpha chain is the DNA polymerase (By similarity).</text>
</comment>
<comment type="catalytic activity">
    <reaction>
        <text>DNA(n) + a 2'-deoxyribonucleoside 5'-triphosphate = DNA(n+1) + diphosphate</text>
        <dbReference type="Rhea" id="RHEA:22508"/>
        <dbReference type="Rhea" id="RHEA-COMP:17339"/>
        <dbReference type="Rhea" id="RHEA-COMP:17340"/>
        <dbReference type="ChEBI" id="CHEBI:33019"/>
        <dbReference type="ChEBI" id="CHEBI:61560"/>
        <dbReference type="ChEBI" id="CHEBI:173112"/>
        <dbReference type="EC" id="2.7.7.7"/>
    </reaction>
</comment>
<comment type="subunit">
    <text evidence="1">DNA polymerase III contains a core (composed of alpha, epsilon and theta chains) that associates with a tau subunit. This core dimerizes to form the PolIII' complex. PolIII' associates with the gamma complex (composed of gamma, delta, delta', psi and chi chains) and with the beta chain to form the complete DNA polymerase III complex (By similarity).</text>
</comment>
<comment type="subcellular location">
    <subcellularLocation>
        <location evidence="1">Cytoplasm</location>
    </subcellularLocation>
</comment>
<comment type="similarity">
    <text evidence="2">Belongs to the DNA polymerase type-C family. DnaE subfamily.</text>
</comment>
<comment type="sequence caution" evidence="2">
    <conflict type="erroneous initiation">
        <sequence resource="EMBL-CDS" id="AAC66944"/>
    </conflict>
</comment>
<keyword id="KW-0963">Cytoplasm</keyword>
<keyword id="KW-0235">DNA replication</keyword>
<keyword id="KW-0239">DNA-directed DNA polymerase</keyword>
<keyword id="KW-0548">Nucleotidyltransferase</keyword>
<keyword id="KW-1185">Reference proteome</keyword>
<keyword id="KW-0808">Transferase</keyword>